<gene>
    <name evidence="1" type="primary">yidC</name>
    <name type="ordered locus">FTN_0073</name>
</gene>
<accession>A0Q419</accession>
<name>YIDC_FRATN</name>
<organism>
    <name type="scientific">Francisella tularensis subsp. novicida (strain U112)</name>
    <dbReference type="NCBI Taxonomy" id="401614"/>
    <lineage>
        <taxon>Bacteria</taxon>
        <taxon>Pseudomonadati</taxon>
        <taxon>Pseudomonadota</taxon>
        <taxon>Gammaproteobacteria</taxon>
        <taxon>Thiotrichales</taxon>
        <taxon>Francisellaceae</taxon>
        <taxon>Francisella</taxon>
    </lineage>
</organism>
<sequence>MKANHIRILLLVTIAIMFISLMGKWEQTFPADNTKQQTSATQNNSHYDNADSSTNTDVTTTDAKSSLAKETNFSKYDNAKSITINTGVFKDVKVSLLDGAIISASLKDYSISLDDKTPMSLLTDKSGSEYIAKSTIVVNKQPISVNFEDQGIKTENGKQILTLTGSADGLQITRTYTFDDTKYNISVSQNIKNTTSAPVNVIVDDSFARDFDPAGDSFSLLNAHSYTFTGVAYSTAKDSFRKESFKDISKTNGQPTVINSDGQGWVAFLQHYFVSAWIPQSTNAKIYYKNLNGDVFEAGAFTGATIAPNQSENISSILYTGPIIKANLVDLAPNLEKTLDYGMLSFFSEIIFWVMNHIHSLVGNWGLAIILVTCLIKLIFYPLSAKSYRSMAKMRMLQPRIKRLQETYKDDRQALGKKMMELYKEEKVNPLSGCLPMLIQIPIFISLYWVLLESVELRQAPFIFWIHDLSMKDPYFVLPVLMGLSMFLQQKLSPAPADPMQAKVMMFLPVIFTFLFASFPSGLVLYWLTNNLISISQQWIITRHYQATHKK</sequence>
<proteinExistence type="inferred from homology"/>
<dbReference type="EMBL" id="CP000439">
    <property type="protein sequence ID" value="ABK88984.1"/>
    <property type="molecule type" value="Genomic_DNA"/>
</dbReference>
<dbReference type="RefSeq" id="WP_003040916.1">
    <property type="nucleotide sequence ID" value="NZ_CP009633.1"/>
</dbReference>
<dbReference type="SMR" id="A0Q419"/>
<dbReference type="KEGG" id="ftn:FTN_0073"/>
<dbReference type="KEGG" id="ftx:AW25_127"/>
<dbReference type="BioCyc" id="FTUL401614:G1G75-76-MONOMER"/>
<dbReference type="Proteomes" id="UP000000762">
    <property type="component" value="Chromosome"/>
</dbReference>
<dbReference type="GO" id="GO:0005886">
    <property type="term" value="C:plasma membrane"/>
    <property type="evidence" value="ECO:0007669"/>
    <property type="project" value="UniProtKB-SubCell"/>
</dbReference>
<dbReference type="GO" id="GO:0032977">
    <property type="term" value="F:membrane insertase activity"/>
    <property type="evidence" value="ECO:0007669"/>
    <property type="project" value="InterPro"/>
</dbReference>
<dbReference type="GO" id="GO:0051205">
    <property type="term" value="P:protein insertion into membrane"/>
    <property type="evidence" value="ECO:0007669"/>
    <property type="project" value="TreeGrafter"/>
</dbReference>
<dbReference type="GO" id="GO:0015031">
    <property type="term" value="P:protein transport"/>
    <property type="evidence" value="ECO:0007669"/>
    <property type="project" value="UniProtKB-KW"/>
</dbReference>
<dbReference type="CDD" id="cd20070">
    <property type="entry name" value="5TM_YidC_Alb3"/>
    <property type="match status" value="1"/>
</dbReference>
<dbReference type="CDD" id="cd19961">
    <property type="entry name" value="EcYidC-like_peri"/>
    <property type="match status" value="1"/>
</dbReference>
<dbReference type="Gene3D" id="2.70.98.90">
    <property type="match status" value="1"/>
</dbReference>
<dbReference type="HAMAP" id="MF_01810">
    <property type="entry name" value="YidC_type1"/>
    <property type="match status" value="1"/>
</dbReference>
<dbReference type="InterPro" id="IPR019998">
    <property type="entry name" value="Membr_insert_YidC"/>
</dbReference>
<dbReference type="InterPro" id="IPR028053">
    <property type="entry name" value="Membr_insert_YidC_N"/>
</dbReference>
<dbReference type="InterPro" id="IPR001708">
    <property type="entry name" value="YidC/ALB3/OXA1/COX18"/>
</dbReference>
<dbReference type="InterPro" id="IPR028055">
    <property type="entry name" value="YidC/Oxa/ALB_C"/>
</dbReference>
<dbReference type="InterPro" id="IPR047196">
    <property type="entry name" value="YidC_ALB_C"/>
</dbReference>
<dbReference type="InterPro" id="IPR038221">
    <property type="entry name" value="YidC_periplasmic_sf"/>
</dbReference>
<dbReference type="NCBIfam" id="NF002352">
    <property type="entry name" value="PRK01318.1-3"/>
    <property type="match status" value="1"/>
</dbReference>
<dbReference type="NCBIfam" id="TIGR03593">
    <property type="entry name" value="yidC_nterm"/>
    <property type="match status" value="1"/>
</dbReference>
<dbReference type="NCBIfam" id="TIGR03592">
    <property type="entry name" value="yidC_oxa1_cterm"/>
    <property type="match status" value="1"/>
</dbReference>
<dbReference type="PANTHER" id="PTHR12428:SF65">
    <property type="entry name" value="CYTOCHROME C OXIDASE ASSEMBLY PROTEIN COX18, MITOCHONDRIAL"/>
    <property type="match status" value="1"/>
</dbReference>
<dbReference type="PANTHER" id="PTHR12428">
    <property type="entry name" value="OXA1"/>
    <property type="match status" value="1"/>
</dbReference>
<dbReference type="Pfam" id="PF02096">
    <property type="entry name" value="60KD_IMP"/>
    <property type="match status" value="1"/>
</dbReference>
<dbReference type="Pfam" id="PF14849">
    <property type="entry name" value="YidC_periplas"/>
    <property type="match status" value="1"/>
</dbReference>
<dbReference type="PRINTS" id="PR00701">
    <property type="entry name" value="60KDINNERMP"/>
</dbReference>
<dbReference type="PRINTS" id="PR01900">
    <property type="entry name" value="YIDCPROTEIN"/>
</dbReference>
<keyword id="KW-0997">Cell inner membrane</keyword>
<keyword id="KW-1003">Cell membrane</keyword>
<keyword id="KW-0143">Chaperone</keyword>
<keyword id="KW-0472">Membrane</keyword>
<keyword id="KW-0653">Protein transport</keyword>
<keyword id="KW-0812">Transmembrane</keyword>
<keyword id="KW-1133">Transmembrane helix</keyword>
<keyword id="KW-0813">Transport</keyword>
<reference key="1">
    <citation type="journal article" date="2007" name="Genome Biol.">
        <title>Comparison of Francisella tularensis genomes reveals evolutionary events associated with the emergence of human pathogenic strains.</title>
        <authorList>
            <person name="Rohmer L."/>
            <person name="Fong C."/>
            <person name="Abmayr S."/>
            <person name="Wasnick M."/>
            <person name="Larson Freeman T.J."/>
            <person name="Radey M."/>
            <person name="Guina T."/>
            <person name="Svensson K."/>
            <person name="Hayden H.S."/>
            <person name="Jacobs M."/>
            <person name="Gallagher L.A."/>
            <person name="Manoil C."/>
            <person name="Ernst R.K."/>
            <person name="Drees B."/>
            <person name="Buckley D."/>
            <person name="Haugen E."/>
            <person name="Bovee D."/>
            <person name="Zhou Y."/>
            <person name="Chang J."/>
            <person name="Levy R."/>
            <person name="Lim R."/>
            <person name="Gillett W."/>
            <person name="Guenthener D."/>
            <person name="Kang A."/>
            <person name="Shaffer S.A."/>
            <person name="Taylor G."/>
            <person name="Chen J."/>
            <person name="Gallis B."/>
            <person name="D'Argenio D.A."/>
            <person name="Forsman M."/>
            <person name="Olson M.V."/>
            <person name="Goodlett D.R."/>
            <person name="Kaul R."/>
            <person name="Miller S.I."/>
            <person name="Brittnacher M.J."/>
        </authorList>
    </citation>
    <scope>NUCLEOTIDE SEQUENCE [LARGE SCALE GENOMIC DNA]</scope>
    <source>
        <strain>U112</strain>
    </source>
</reference>
<protein>
    <recommendedName>
        <fullName evidence="1">Membrane protein insertase YidC</fullName>
    </recommendedName>
    <alternativeName>
        <fullName evidence="1">Foldase YidC</fullName>
    </alternativeName>
    <alternativeName>
        <fullName evidence="1">Membrane integrase YidC</fullName>
    </alternativeName>
    <alternativeName>
        <fullName evidence="1">Membrane protein YidC</fullName>
    </alternativeName>
</protein>
<evidence type="ECO:0000255" key="1">
    <source>
        <dbReference type="HAMAP-Rule" id="MF_01810"/>
    </source>
</evidence>
<evidence type="ECO:0000256" key="2">
    <source>
        <dbReference type="SAM" id="MobiDB-lite"/>
    </source>
</evidence>
<comment type="function">
    <text evidence="1">Required for the insertion and/or proper folding and/or complex formation of integral membrane proteins into the membrane. Involved in integration of membrane proteins that insert both dependently and independently of the Sec translocase complex, as well as at least some lipoproteins. Aids folding of multispanning membrane proteins.</text>
</comment>
<comment type="subunit">
    <text evidence="1">Interacts with the Sec translocase complex via SecD. Specifically interacts with transmembrane segments of nascent integral membrane proteins during membrane integration.</text>
</comment>
<comment type="subcellular location">
    <subcellularLocation>
        <location evidence="1">Cell inner membrane</location>
        <topology evidence="1">Multi-pass membrane protein</topology>
    </subcellularLocation>
</comment>
<comment type="similarity">
    <text evidence="1">Belongs to the OXA1/ALB3/YidC family. Type 1 subfamily.</text>
</comment>
<feature type="chain" id="PRO_1000070096" description="Membrane protein insertase YidC">
    <location>
        <begin position="1"/>
        <end position="551"/>
    </location>
</feature>
<feature type="transmembrane region" description="Helical" evidence="1">
    <location>
        <begin position="3"/>
        <end position="23"/>
    </location>
</feature>
<feature type="transmembrane region" description="Helical" evidence="1">
    <location>
        <begin position="361"/>
        <end position="381"/>
    </location>
</feature>
<feature type="transmembrane region" description="Helical" evidence="1">
    <location>
        <begin position="431"/>
        <end position="451"/>
    </location>
</feature>
<feature type="transmembrane region" description="Helical" evidence="1">
    <location>
        <begin position="504"/>
        <end position="524"/>
    </location>
</feature>
<feature type="region of interest" description="Disordered" evidence="2">
    <location>
        <begin position="33"/>
        <end position="58"/>
    </location>
</feature>
<feature type="compositionally biased region" description="Polar residues" evidence="2">
    <location>
        <begin position="33"/>
        <end position="47"/>
    </location>
</feature>